<proteinExistence type="inferred from homology"/>
<reference key="1">
    <citation type="submission" date="2008-10" db="EMBL/GenBank/DDBJ databases">
        <title>Genome sequence of Bacillus cereus G9842.</title>
        <authorList>
            <person name="Dodson R.J."/>
            <person name="Durkin A.S."/>
            <person name="Rosovitz M.J."/>
            <person name="Rasko D.A."/>
            <person name="Hoffmaster A."/>
            <person name="Ravel J."/>
            <person name="Sutton G."/>
        </authorList>
    </citation>
    <scope>NUCLEOTIDE SEQUENCE [LARGE SCALE GENOMIC DNA]</scope>
    <source>
        <strain>G9842</strain>
    </source>
</reference>
<dbReference type="EC" id="5.3.1.24" evidence="1"/>
<dbReference type="EMBL" id="CP001186">
    <property type="protein sequence ID" value="ACK96600.1"/>
    <property type="molecule type" value="Genomic_DNA"/>
</dbReference>
<dbReference type="RefSeq" id="WP_000865128.1">
    <property type="nucleotide sequence ID" value="NC_011772.1"/>
</dbReference>
<dbReference type="SMR" id="B7IM75"/>
<dbReference type="KEGG" id="bcg:BCG9842_B4049"/>
<dbReference type="HOGENOM" id="CLU_076364_1_0_9"/>
<dbReference type="UniPathway" id="UPA00035">
    <property type="reaction ID" value="UER00042"/>
</dbReference>
<dbReference type="Proteomes" id="UP000006744">
    <property type="component" value="Chromosome"/>
</dbReference>
<dbReference type="GO" id="GO:0004640">
    <property type="term" value="F:phosphoribosylanthranilate isomerase activity"/>
    <property type="evidence" value="ECO:0007669"/>
    <property type="project" value="UniProtKB-UniRule"/>
</dbReference>
<dbReference type="GO" id="GO:0000162">
    <property type="term" value="P:L-tryptophan biosynthetic process"/>
    <property type="evidence" value="ECO:0007669"/>
    <property type="project" value="UniProtKB-UniRule"/>
</dbReference>
<dbReference type="CDD" id="cd00405">
    <property type="entry name" value="PRAI"/>
    <property type="match status" value="1"/>
</dbReference>
<dbReference type="FunFam" id="3.20.20.70:FF:000075">
    <property type="entry name" value="Tryptophan biosynthesis protein TRP1"/>
    <property type="match status" value="1"/>
</dbReference>
<dbReference type="Gene3D" id="3.20.20.70">
    <property type="entry name" value="Aldolase class I"/>
    <property type="match status" value="1"/>
</dbReference>
<dbReference type="HAMAP" id="MF_00135">
    <property type="entry name" value="PRAI"/>
    <property type="match status" value="1"/>
</dbReference>
<dbReference type="InterPro" id="IPR013785">
    <property type="entry name" value="Aldolase_TIM"/>
</dbReference>
<dbReference type="InterPro" id="IPR001240">
    <property type="entry name" value="PRAI_dom"/>
</dbReference>
<dbReference type="InterPro" id="IPR011060">
    <property type="entry name" value="RibuloseP-bd_barrel"/>
</dbReference>
<dbReference type="InterPro" id="IPR044643">
    <property type="entry name" value="TrpF_fam"/>
</dbReference>
<dbReference type="NCBIfam" id="NF002297">
    <property type="entry name" value="PRK01222.1-3"/>
    <property type="match status" value="1"/>
</dbReference>
<dbReference type="PANTHER" id="PTHR42894">
    <property type="entry name" value="N-(5'-PHOSPHORIBOSYL)ANTHRANILATE ISOMERASE"/>
    <property type="match status" value="1"/>
</dbReference>
<dbReference type="PANTHER" id="PTHR42894:SF1">
    <property type="entry name" value="N-(5'-PHOSPHORIBOSYL)ANTHRANILATE ISOMERASE"/>
    <property type="match status" value="1"/>
</dbReference>
<dbReference type="Pfam" id="PF00697">
    <property type="entry name" value="PRAI"/>
    <property type="match status" value="1"/>
</dbReference>
<dbReference type="SUPFAM" id="SSF51366">
    <property type="entry name" value="Ribulose-phoshate binding barrel"/>
    <property type="match status" value="1"/>
</dbReference>
<gene>
    <name evidence="1" type="primary">trpF</name>
    <name type="ordered locus">BCG9842_B4049</name>
</gene>
<evidence type="ECO:0000255" key="1">
    <source>
        <dbReference type="HAMAP-Rule" id="MF_00135"/>
    </source>
</evidence>
<comment type="catalytic activity">
    <reaction evidence="1">
        <text>N-(5-phospho-beta-D-ribosyl)anthranilate = 1-(2-carboxyphenylamino)-1-deoxy-D-ribulose 5-phosphate</text>
        <dbReference type="Rhea" id="RHEA:21540"/>
        <dbReference type="ChEBI" id="CHEBI:18277"/>
        <dbReference type="ChEBI" id="CHEBI:58613"/>
        <dbReference type="EC" id="5.3.1.24"/>
    </reaction>
</comment>
<comment type="pathway">
    <text evidence="1">Amino-acid biosynthesis; L-tryptophan biosynthesis; L-tryptophan from chorismate: step 3/5.</text>
</comment>
<comment type="similarity">
    <text evidence="1">Belongs to the TrpF family.</text>
</comment>
<keyword id="KW-0028">Amino-acid biosynthesis</keyword>
<keyword id="KW-0057">Aromatic amino acid biosynthesis</keyword>
<keyword id="KW-0413">Isomerase</keyword>
<keyword id="KW-0822">Tryptophan biosynthesis</keyword>
<sequence>MKVKICGITDVETAKCACEYGADAIGFVFAESKRKITLGLAKEIIGKLPAHVLKIGVFVNESVEVIQKIADECGLTHVQLHGDEENHQIRRLNIPSIKSLGVTSESDMKSAQAYETDYILFDSPKEKFHGGNGKTFSWELLEHMPKELRKKTILAGGLNILNIEEAIRTVRPYMVDVSSGVETEGKKDLKKIKQFIIKSKECSK</sequence>
<accession>B7IM75</accession>
<protein>
    <recommendedName>
        <fullName evidence="1">N-(5'-phosphoribosyl)anthranilate isomerase</fullName>
        <shortName evidence="1">PRAI</shortName>
        <ecNumber evidence="1">5.3.1.24</ecNumber>
    </recommendedName>
</protein>
<name>TRPF_BACC2</name>
<organism>
    <name type="scientific">Bacillus cereus (strain G9842)</name>
    <dbReference type="NCBI Taxonomy" id="405531"/>
    <lineage>
        <taxon>Bacteria</taxon>
        <taxon>Bacillati</taxon>
        <taxon>Bacillota</taxon>
        <taxon>Bacilli</taxon>
        <taxon>Bacillales</taxon>
        <taxon>Bacillaceae</taxon>
        <taxon>Bacillus</taxon>
        <taxon>Bacillus cereus group</taxon>
    </lineage>
</organism>
<feature type="chain" id="PRO_1000197079" description="N-(5'-phosphoribosyl)anthranilate isomerase">
    <location>
        <begin position="1"/>
        <end position="204"/>
    </location>
</feature>